<comment type="function">
    <text evidence="1">Catalyzes the transfer of a ribosyl phosphate group from 5-phosphoribose 1-diphosphate to orotate, leading to the formation of orotidine monophosphate (OMP).</text>
</comment>
<comment type="catalytic activity">
    <reaction evidence="1">
        <text>orotidine 5'-phosphate + diphosphate = orotate + 5-phospho-alpha-D-ribose 1-diphosphate</text>
        <dbReference type="Rhea" id="RHEA:10380"/>
        <dbReference type="ChEBI" id="CHEBI:30839"/>
        <dbReference type="ChEBI" id="CHEBI:33019"/>
        <dbReference type="ChEBI" id="CHEBI:57538"/>
        <dbReference type="ChEBI" id="CHEBI:58017"/>
        <dbReference type="EC" id="2.4.2.10"/>
    </reaction>
</comment>
<comment type="cofactor">
    <cofactor evidence="1">
        <name>Mg(2+)</name>
        <dbReference type="ChEBI" id="CHEBI:18420"/>
    </cofactor>
</comment>
<comment type="pathway">
    <text evidence="1">Pyrimidine metabolism; UMP biosynthesis via de novo pathway; UMP from orotate: step 1/2.</text>
</comment>
<comment type="subunit">
    <text evidence="1">Homodimer.</text>
</comment>
<comment type="similarity">
    <text evidence="1">Belongs to the purine/pyrimidine phosphoribosyltransferase family. PyrE subfamily.</text>
</comment>
<protein>
    <recommendedName>
        <fullName evidence="1">Orotate phosphoribosyltransferase</fullName>
        <shortName evidence="1">OPRT</shortName>
        <shortName evidence="1">OPRTase</shortName>
        <ecNumber evidence="1">2.4.2.10</ecNumber>
    </recommendedName>
</protein>
<keyword id="KW-0328">Glycosyltransferase</keyword>
<keyword id="KW-0460">Magnesium</keyword>
<keyword id="KW-0665">Pyrimidine biosynthesis</keyword>
<keyword id="KW-0808">Transferase</keyword>
<reference key="1">
    <citation type="journal article" date="2006" name="Mol. Microbiol.">
        <title>Role of pathogenicity island-associated integrases in the genome plasticity of uropathogenic Escherichia coli strain 536.</title>
        <authorList>
            <person name="Hochhut B."/>
            <person name="Wilde C."/>
            <person name="Balling G."/>
            <person name="Middendorf B."/>
            <person name="Dobrindt U."/>
            <person name="Brzuszkiewicz E."/>
            <person name="Gottschalk G."/>
            <person name="Carniel E."/>
            <person name="Hacker J."/>
        </authorList>
    </citation>
    <scope>NUCLEOTIDE SEQUENCE [LARGE SCALE GENOMIC DNA]</scope>
    <source>
        <strain>536 / UPEC</strain>
    </source>
</reference>
<dbReference type="EC" id="2.4.2.10" evidence="1"/>
<dbReference type="EMBL" id="CP000247">
    <property type="protein sequence ID" value="ABG71712.1"/>
    <property type="molecule type" value="Genomic_DNA"/>
</dbReference>
<dbReference type="RefSeq" id="WP_000806177.1">
    <property type="nucleotide sequence ID" value="NC_008253.1"/>
</dbReference>
<dbReference type="SMR" id="Q0TBG7"/>
<dbReference type="GeneID" id="75202211"/>
<dbReference type="KEGG" id="ecp:ECP_3740"/>
<dbReference type="HOGENOM" id="CLU_074878_0_1_6"/>
<dbReference type="UniPathway" id="UPA00070">
    <property type="reaction ID" value="UER00119"/>
</dbReference>
<dbReference type="Proteomes" id="UP000009182">
    <property type="component" value="Chromosome"/>
</dbReference>
<dbReference type="GO" id="GO:0005737">
    <property type="term" value="C:cytoplasm"/>
    <property type="evidence" value="ECO:0007669"/>
    <property type="project" value="TreeGrafter"/>
</dbReference>
<dbReference type="GO" id="GO:0000287">
    <property type="term" value="F:magnesium ion binding"/>
    <property type="evidence" value="ECO:0007669"/>
    <property type="project" value="UniProtKB-UniRule"/>
</dbReference>
<dbReference type="GO" id="GO:0004588">
    <property type="term" value="F:orotate phosphoribosyltransferase activity"/>
    <property type="evidence" value="ECO:0007669"/>
    <property type="project" value="UniProtKB-UniRule"/>
</dbReference>
<dbReference type="GO" id="GO:0006207">
    <property type="term" value="P:'de novo' pyrimidine nucleobase biosynthetic process"/>
    <property type="evidence" value="ECO:0007669"/>
    <property type="project" value="TreeGrafter"/>
</dbReference>
<dbReference type="GO" id="GO:0044205">
    <property type="term" value="P:'de novo' UMP biosynthetic process"/>
    <property type="evidence" value="ECO:0007669"/>
    <property type="project" value="UniProtKB-UniRule"/>
</dbReference>
<dbReference type="GO" id="GO:0046132">
    <property type="term" value="P:pyrimidine ribonucleoside biosynthetic process"/>
    <property type="evidence" value="ECO:0007669"/>
    <property type="project" value="TreeGrafter"/>
</dbReference>
<dbReference type="CDD" id="cd06223">
    <property type="entry name" value="PRTases_typeI"/>
    <property type="match status" value="1"/>
</dbReference>
<dbReference type="FunFam" id="3.40.50.2020:FF:000008">
    <property type="entry name" value="Orotate phosphoribosyltransferase"/>
    <property type="match status" value="1"/>
</dbReference>
<dbReference type="Gene3D" id="3.40.50.2020">
    <property type="match status" value="1"/>
</dbReference>
<dbReference type="HAMAP" id="MF_01208">
    <property type="entry name" value="PyrE"/>
    <property type="match status" value="1"/>
</dbReference>
<dbReference type="InterPro" id="IPR023031">
    <property type="entry name" value="OPRT"/>
</dbReference>
<dbReference type="InterPro" id="IPR004467">
    <property type="entry name" value="Or_phspho_trans_dom"/>
</dbReference>
<dbReference type="InterPro" id="IPR000836">
    <property type="entry name" value="PRibTrfase_dom"/>
</dbReference>
<dbReference type="InterPro" id="IPR029057">
    <property type="entry name" value="PRTase-like"/>
</dbReference>
<dbReference type="NCBIfam" id="TIGR00336">
    <property type="entry name" value="pyrE"/>
    <property type="match status" value="1"/>
</dbReference>
<dbReference type="PANTHER" id="PTHR46683">
    <property type="entry name" value="OROTATE PHOSPHORIBOSYLTRANSFERASE 1-RELATED"/>
    <property type="match status" value="1"/>
</dbReference>
<dbReference type="PANTHER" id="PTHR46683:SF1">
    <property type="entry name" value="OROTATE PHOSPHORIBOSYLTRANSFERASE 1-RELATED"/>
    <property type="match status" value="1"/>
</dbReference>
<dbReference type="Pfam" id="PF00156">
    <property type="entry name" value="Pribosyltran"/>
    <property type="match status" value="1"/>
</dbReference>
<dbReference type="SUPFAM" id="SSF53271">
    <property type="entry name" value="PRTase-like"/>
    <property type="match status" value="1"/>
</dbReference>
<dbReference type="PROSITE" id="PS00103">
    <property type="entry name" value="PUR_PYR_PR_TRANSFER"/>
    <property type="match status" value="1"/>
</dbReference>
<name>PYRE_ECOL5</name>
<sequence>MKPYQRQFIEFALSKQVLKFGEFTLKSGRKSPYFFNAGLFNTGRDLALLGRFYAEALVDSGIEFDLLFGPAYKGIPIATTTAVALAEHHDLDLPYCFNRKEAKDHGEGGNLVGSALQGRVMLVDDVITAGTAIRESMEIIQANGATLAGVLISLDRQERGRGEISAIQEVERDYNCKVISIITLKDLIAYLEEKPEMAEHLAAVKAYREEFGV</sequence>
<proteinExistence type="inferred from homology"/>
<accession>Q0TBG7</accession>
<evidence type="ECO:0000255" key="1">
    <source>
        <dbReference type="HAMAP-Rule" id="MF_01208"/>
    </source>
</evidence>
<gene>
    <name evidence="1" type="primary">pyrE</name>
    <name type="ordered locus">ECP_3740</name>
</gene>
<organism>
    <name type="scientific">Escherichia coli O6:K15:H31 (strain 536 / UPEC)</name>
    <dbReference type="NCBI Taxonomy" id="362663"/>
    <lineage>
        <taxon>Bacteria</taxon>
        <taxon>Pseudomonadati</taxon>
        <taxon>Pseudomonadota</taxon>
        <taxon>Gammaproteobacteria</taxon>
        <taxon>Enterobacterales</taxon>
        <taxon>Enterobacteriaceae</taxon>
        <taxon>Escherichia</taxon>
    </lineage>
</organism>
<feature type="chain" id="PRO_1000066229" description="Orotate phosphoribosyltransferase">
    <location>
        <begin position="1"/>
        <end position="213"/>
    </location>
</feature>
<feature type="binding site" description="in other chain" evidence="1">
    <location>
        <position position="26"/>
    </location>
    <ligand>
        <name>5-phospho-alpha-D-ribose 1-diphosphate</name>
        <dbReference type="ChEBI" id="CHEBI:58017"/>
        <note>ligand shared between dimeric partners</note>
    </ligand>
</feature>
<feature type="binding site" evidence="1">
    <location>
        <begin position="34"/>
        <end position="35"/>
    </location>
    <ligand>
        <name>orotate</name>
        <dbReference type="ChEBI" id="CHEBI:30839"/>
    </ligand>
</feature>
<feature type="binding site" description="in other chain" evidence="1">
    <location>
        <begin position="72"/>
        <end position="73"/>
    </location>
    <ligand>
        <name>5-phospho-alpha-D-ribose 1-diphosphate</name>
        <dbReference type="ChEBI" id="CHEBI:58017"/>
        <note>ligand shared between dimeric partners</note>
    </ligand>
</feature>
<feature type="binding site" evidence="1">
    <location>
        <position position="99"/>
    </location>
    <ligand>
        <name>5-phospho-alpha-D-ribose 1-diphosphate</name>
        <dbReference type="ChEBI" id="CHEBI:58017"/>
        <note>ligand shared between dimeric partners</note>
    </ligand>
</feature>
<feature type="binding site" description="in other chain" evidence="1">
    <location>
        <position position="100"/>
    </location>
    <ligand>
        <name>5-phospho-alpha-D-ribose 1-diphosphate</name>
        <dbReference type="ChEBI" id="CHEBI:58017"/>
        <note>ligand shared between dimeric partners</note>
    </ligand>
</feature>
<feature type="binding site" evidence="1">
    <location>
        <position position="103"/>
    </location>
    <ligand>
        <name>5-phospho-alpha-D-ribose 1-diphosphate</name>
        <dbReference type="ChEBI" id="CHEBI:58017"/>
        <note>ligand shared between dimeric partners</note>
    </ligand>
</feature>
<feature type="binding site" evidence="1">
    <location>
        <position position="105"/>
    </location>
    <ligand>
        <name>5-phospho-alpha-D-ribose 1-diphosphate</name>
        <dbReference type="ChEBI" id="CHEBI:58017"/>
        <note>ligand shared between dimeric partners</note>
    </ligand>
</feature>
<feature type="binding site" description="in other chain" evidence="1">
    <location>
        <begin position="124"/>
        <end position="132"/>
    </location>
    <ligand>
        <name>5-phospho-alpha-D-ribose 1-diphosphate</name>
        <dbReference type="ChEBI" id="CHEBI:58017"/>
        <note>ligand shared between dimeric partners</note>
    </ligand>
</feature>
<feature type="binding site" evidence="1">
    <location>
        <position position="128"/>
    </location>
    <ligand>
        <name>orotate</name>
        <dbReference type="ChEBI" id="CHEBI:30839"/>
    </ligand>
</feature>
<feature type="binding site" evidence="1">
    <location>
        <position position="156"/>
    </location>
    <ligand>
        <name>orotate</name>
        <dbReference type="ChEBI" id="CHEBI:30839"/>
    </ligand>
</feature>